<organism>
    <name type="scientific">Yersinia enterocolitica</name>
    <dbReference type="NCBI Taxonomy" id="630"/>
    <lineage>
        <taxon>Bacteria</taxon>
        <taxon>Pseudomonadati</taxon>
        <taxon>Pseudomonadota</taxon>
        <taxon>Gammaproteobacteria</taxon>
        <taxon>Enterobacterales</taxon>
        <taxon>Yersiniaceae</taxon>
        <taxon>Yersinia</taxon>
    </lineage>
</organism>
<accession>Q01166</accession>
<comment type="catalytic activity">
    <reaction evidence="3">
        <text>a beta-lactam + H2O = a substituted beta-amino acid</text>
        <dbReference type="Rhea" id="RHEA:20401"/>
        <dbReference type="ChEBI" id="CHEBI:15377"/>
        <dbReference type="ChEBI" id="CHEBI:35627"/>
        <dbReference type="ChEBI" id="CHEBI:140347"/>
        <dbReference type="EC" id="3.5.2.6"/>
    </reaction>
</comment>
<comment type="miscellaneous">
    <text evidence="5">The class A beta-lactamase family has a specific amino-acid numbering system, sometimes called Ambler or ABL numbering and often misspelt as Amber. A multiple sequence alignment was used to derive a consensus sequence and then the consensus was numbered taking into account insertions and deletions. This allows use of identical numbers, e.g. for active site residues, despite differences in protein length. UniProt always uses natural numbering of residues, hence there appear to be differences in numbering between this entry and some papers.</text>
</comment>
<comment type="similarity">
    <text evidence="4">Belongs to the class-A beta-lactamase family.</text>
</comment>
<protein>
    <recommendedName>
        <fullName>Beta-lactamase</fullName>
        <ecNumber>3.5.2.6</ecNumber>
    </recommendedName>
    <alternativeName>
        <fullName>Penicillinase</fullName>
    </alternativeName>
</protein>
<name>BLAC_YEREN</name>
<proteinExistence type="evidence at protein level"/>
<feature type="signal peptide" evidence="2">
    <location>
        <begin position="1"/>
        <end position="30"/>
    </location>
</feature>
<feature type="chain" id="PRO_0000017022" description="Beta-lactamase">
    <location>
        <begin position="31"/>
        <end position="294"/>
    </location>
</feature>
<feature type="active site" description="Acyl-ester intermediate" evidence="3">
    <location>
        <position position="75"/>
    </location>
</feature>
<feature type="binding site" evidence="1">
    <location>
        <begin position="239"/>
        <end position="241"/>
    </location>
    <ligand>
        <name>substrate</name>
    </ligand>
</feature>
<feature type="helix" evidence="6">
    <location>
        <begin position="33"/>
        <end position="45"/>
    </location>
</feature>
<feature type="strand" evidence="6">
    <location>
        <begin position="48"/>
        <end position="56"/>
    </location>
</feature>
<feature type="turn" evidence="6">
    <location>
        <begin position="57"/>
        <end position="59"/>
    </location>
</feature>
<feature type="strand" evidence="6">
    <location>
        <begin position="62"/>
        <end position="66"/>
    </location>
</feature>
<feature type="helix" evidence="6">
    <location>
        <begin position="74"/>
        <end position="76"/>
    </location>
</feature>
<feature type="helix" evidence="6">
    <location>
        <begin position="77"/>
        <end position="89"/>
    </location>
</feature>
<feature type="helix" evidence="6">
    <location>
        <begin position="95"/>
        <end position="97"/>
    </location>
</feature>
<feature type="helix" evidence="6">
    <location>
        <begin position="104"/>
        <end position="106"/>
    </location>
</feature>
<feature type="helix" evidence="6">
    <location>
        <begin position="112"/>
        <end position="116"/>
    </location>
</feature>
<feature type="turn" evidence="6">
    <location>
        <begin position="117"/>
        <end position="120"/>
    </location>
</feature>
<feature type="helix" evidence="6">
    <location>
        <begin position="124"/>
        <end position="134"/>
    </location>
</feature>
<feature type="helix" evidence="6">
    <location>
        <begin position="137"/>
        <end position="147"/>
    </location>
</feature>
<feature type="helix" evidence="6">
    <location>
        <begin position="150"/>
        <end position="159"/>
    </location>
</feature>
<feature type="helix" evidence="6">
    <location>
        <begin position="173"/>
        <end position="175"/>
    </location>
</feature>
<feature type="helix" evidence="6">
    <location>
        <begin position="188"/>
        <end position="200"/>
    </location>
</feature>
<feature type="strand" evidence="6">
    <location>
        <begin position="201"/>
        <end position="204"/>
    </location>
</feature>
<feature type="helix" evidence="6">
    <location>
        <begin position="206"/>
        <end position="217"/>
    </location>
</feature>
<feature type="turn" evidence="6">
    <location>
        <begin position="223"/>
        <end position="225"/>
    </location>
</feature>
<feature type="helix" evidence="6">
    <location>
        <begin position="226"/>
        <end position="229"/>
    </location>
</feature>
<feature type="strand" evidence="6">
    <location>
        <begin position="234"/>
        <end position="243"/>
    </location>
</feature>
<feature type="turn" evidence="6">
    <location>
        <begin position="244"/>
        <end position="246"/>
    </location>
</feature>
<feature type="strand" evidence="6">
    <location>
        <begin position="247"/>
        <end position="255"/>
    </location>
</feature>
<feature type="strand" evidence="6">
    <location>
        <begin position="257"/>
        <end position="260"/>
    </location>
</feature>
<feature type="strand" evidence="6">
    <location>
        <begin position="262"/>
        <end position="272"/>
    </location>
</feature>
<feature type="helix" evidence="6">
    <location>
        <begin position="279"/>
        <end position="291"/>
    </location>
</feature>
<keyword id="KW-0002">3D-structure</keyword>
<keyword id="KW-0046">Antibiotic resistance</keyword>
<keyword id="KW-0378">Hydrolase</keyword>
<keyword id="KW-0732">Signal</keyword>
<sequence>MKHSSLRRSLLLAGITLPLVSFALPAWANALPASVDKQLAELERNANGRLGVAMINTGNGTKILYRAAQRFPFCSTFKFMLAAAVLDQSQSQPNLLNKHINYHESDLLSYAPITRKNLAHGMTVSELCAATIQYSDNTAANLLIKELGGLAAVNQFARSIGDQMFRLDRWEPDLNTARPNDPRDTTTPAAMAASMNKLVLGDALRPAQRSQLAVWLKGNTTGDATIRAGAPTDWIVGDKTGSGDYGTTNDIAVLWPTKGAPIVLVVYFTQREKDAKPRRDVLASVTKIILSQIS</sequence>
<evidence type="ECO:0000250" key="1"/>
<evidence type="ECO:0000255" key="2"/>
<evidence type="ECO:0000255" key="3">
    <source>
        <dbReference type="PROSITE-ProRule" id="PRU10101"/>
    </source>
</evidence>
<evidence type="ECO:0000305" key="4"/>
<evidence type="ECO:0000305" key="5">
    <source>
    </source>
</evidence>
<evidence type="ECO:0007829" key="6">
    <source>
        <dbReference type="PDB" id="8IX8"/>
    </source>
</evidence>
<reference key="1">
    <citation type="journal article" date="1991" name="Mol. Gen. Genet.">
        <title>Nucleotide sequence of a new class A beta-lactamase gene from the chromosome of Yersinia enterocolitica: implications for the evolution of class A beta-lactamases.</title>
        <authorList>
            <person name="Seoane A."/>
            <person name="Garcia Lobo J.M."/>
        </authorList>
    </citation>
    <scope>NUCLEOTIDE SEQUENCE [GENOMIC DNA]</scope>
    <source>
        <strain>Y-56 / Serotype O:3</strain>
    </source>
</reference>
<reference key="2">
    <citation type="journal article" date="1991" name="Biochem. J.">
        <title>A standard numbering scheme for the class A beta-lactamases.</title>
        <authorList>
            <person name="Ambler R.P."/>
            <person name="Coulson A.F."/>
            <person name="Frere J.M."/>
            <person name="Ghuysen J.M."/>
            <person name="Joris B."/>
            <person name="Forsman M."/>
            <person name="Levesque R.C."/>
            <person name="Tiraby G."/>
            <person name="Waley S.G."/>
        </authorList>
    </citation>
    <scope>AMINO ACID NUMBERING SCHEME</scope>
</reference>
<dbReference type="EC" id="3.5.2.6"/>
<dbReference type="EMBL" id="X57074">
    <property type="protein sequence ID" value="CAA40357.1"/>
    <property type="molecule type" value="Genomic_DNA"/>
</dbReference>
<dbReference type="PIR" id="S16553">
    <property type="entry name" value="S16553"/>
</dbReference>
<dbReference type="RefSeq" id="WP_005165780.1">
    <property type="nucleotide sequence ID" value="NZ_WJHZ01000002.1"/>
</dbReference>
<dbReference type="PDB" id="8IWV">
    <property type="method" value="X-ray"/>
    <property type="resolution" value="2.40 A"/>
    <property type="chains" value="A=1-294"/>
</dbReference>
<dbReference type="PDB" id="8IX8">
    <property type="method" value="X-ray"/>
    <property type="resolution" value="1.50 A"/>
    <property type="chains" value="A=1-294"/>
</dbReference>
<dbReference type="PDB" id="8IXX">
    <property type="method" value="X-ray"/>
    <property type="resolution" value="1.70 A"/>
    <property type="chains" value="A=1-294"/>
</dbReference>
<dbReference type="PDB" id="8IY4">
    <property type="method" value="X-ray"/>
    <property type="resolution" value="2.00 A"/>
    <property type="chains" value="A=1-294"/>
</dbReference>
<dbReference type="PDBsum" id="8IWV"/>
<dbReference type="PDBsum" id="8IX8"/>
<dbReference type="PDBsum" id="8IXX"/>
<dbReference type="PDBsum" id="8IY4"/>
<dbReference type="SMR" id="Q01166"/>
<dbReference type="GeneID" id="31409094"/>
<dbReference type="BRENDA" id="3.5.2.6">
    <property type="organism ID" value="6741"/>
</dbReference>
<dbReference type="GO" id="GO:0008800">
    <property type="term" value="F:beta-lactamase activity"/>
    <property type="evidence" value="ECO:0007669"/>
    <property type="project" value="UniProtKB-EC"/>
</dbReference>
<dbReference type="GO" id="GO:0030655">
    <property type="term" value="P:beta-lactam antibiotic catabolic process"/>
    <property type="evidence" value="ECO:0007669"/>
    <property type="project" value="InterPro"/>
</dbReference>
<dbReference type="GO" id="GO:0046677">
    <property type="term" value="P:response to antibiotic"/>
    <property type="evidence" value="ECO:0007669"/>
    <property type="project" value="UniProtKB-KW"/>
</dbReference>
<dbReference type="Gene3D" id="3.40.710.10">
    <property type="entry name" value="DD-peptidase/beta-lactamase superfamily"/>
    <property type="match status" value="1"/>
</dbReference>
<dbReference type="InterPro" id="IPR012338">
    <property type="entry name" value="Beta-lactam/transpept-like"/>
</dbReference>
<dbReference type="InterPro" id="IPR045155">
    <property type="entry name" value="Beta-lactam_cat"/>
</dbReference>
<dbReference type="InterPro" id="IPR000871">
    <property type="entry name" value="Beta-lactam_class-A"/>
</dbReference>
<dbReference type="InterPro" id="IPR023650">
    <property type="entry name" value="Beta-lactam_class-A_AS"/>
</dbReference>
<dbReference type="NCBIfam" id="NF033103">
    <property type="entry name" value="bla_class_A"/>
    <property type="match status" value="1"/>
</dbReference>
<dbReference type="NCBIfam" id="NF033152">
    <property type="entry name" value="BlaA_Yent"/>
    <property type="match status" value="1"/>
</dbReference>
<dbReference type="PANTHER" id="PTHR35333">
    <property type="entry name" value="BETA-LACTAMASE"/>
    <property type="match status" value="1"/>
</dbReference>
<dbReference type="PANTHER" id="PTHR35333:SF3">
    <property type="entry name" value="BETA-LACTAMASE-TYPE TRANSPEPTIDASE FOLD CONTAINING PROTEIN"/>
    <property type="match status" value="1"/>
</dbReference>
<dbReference type="Pfam" id="PF13354">
    <property type="entry name" value="Beta-lactamase2"/>
    <property type="match status" value="1"/>
</dbReference>
<dbReference type="PRINTS" id="PR00118">
    <property type="entry name" value="BLACTAMASEA"/>
</dbReference>
<dbReference type="SUPFAM" id="SSF56601">
    <property type="entry name" value="beta-lactamase/transpeptidase-like"/>
    <property type="match status" value="1"/>
</dbReference>
<dbReference type="PROSITE" id="PS00146">
    <property type="entry name" value="BETA_LACTAMASE_A"/>
    <property type="match status" value="1"/>
</dbReference>
<gene>
    <name type="primary">blaA</name>
</gene>